<comment type="function">
    <text evidence="1">Key component of the proton channel; it plays a direct role in the translocation of protons across the membrane.</text>
</comment>
<comment type="subunit">
    <text evidence="1">F-type ATPases have 2 components, CF(1) - the catalytic core - and CF(0) - the membrane proton channel. CF(1) has five subunits: alpha(3), beta(3), gamma(1), delta(1), epsilon(1). CF(0) has three main subunits: a(1), b(2) and c(9-12). The alpha and beta chains form an alternating ring which encloses part of the gamma chain. CF(1) is attached to CF(0) by a central stalk formed by the gamma and epsilon chains, while a peripheral stalk is formed by the delta and b chains.</text>
</comment>
<comment type="subcellular location">
    <subcellularLocation>
        <location evidence="1">Cell inner membrane</location>
        <topology evidence="1">Multi-pass membrane protein</topology>
    </subcellularLocation>
</comment>
<comment type="similarity">
    <text evidence="1">Belongs to the ATPase A chain family.</text>
</comment>
<organism>
    <name type="scientific">Histophilus somni (strain 129Pt)</name>
    <name type="common">Haemophilus somnus</name>
    <dbReference type="NCBI Taxonomy" id="205914"/>
    <lineage>
        <taxon>Bacteria</taxon>
        <taxon>Pseudomonadati</taxon>
        <taxon>Pseudomonadota</taxon>
        <taxon>Gammaproteobacteria</taxon>
        <taxon>Pasteurellales</taxon>
        <taxon>Pasteurellaceae</taxon>
        <taxon>Histophilus</taxon>
    </lineage>
</organism>
<evidence type="ECO:0000255" key="1">
    <source>
        <dbReference type="HAMAP-Rule" id="MF_01393"/>
    </source>
</evidence>
<reference key="1">
    <citation type="journal article" date="2007" name="J. Bacteriol.">
        <title>Complete genome sequence of Haemophilus somnus (Histophilus somni) strain 129Pt and comparison to Haemophilus ducreyi 35000HP and Haemophilus influenzae Rd.</title>
        <authorList>
            <person name="Challacombe J.F."/>
            <person name="Duncan A.J."/>
            <person name="Brettin T.S."/>
            <person name="Bruce D."/>
            <person name="Chertkov O."/>
            <person name="Detter J.C."/>
            <person name="Han C.S."/>
            <person name="Misra M."/>
            <person name="Richardson P."/>
            <person name="Tapia R."/>
            <person name="Thayer N."/>
            <person name="Xie G."/>
            <person name="Inzana T.J."/>
        </authorList>
    </citation>
    <scope>NUCLEOTIDE SEQUENCE [LARGE SCALE GENOMIC DNA]</scope>
    <source>
        <strain>129Pt</strain>
    </source>
</reference>
<name>ATP6_HISS1</name>
<feature type="chain" id="PRO_0000362323" description="ATP synthase subunit a">
    <location>
        <begin position="1"/>
        <end position="265"/>
    </location>
</feature>
<feature type="transmembrane region" description="Helical" evidence="1">
    <location>
        <begin position="26"/>
        <end position="46"/>
    </location>
</feature>
<feature type="transmembrane region" description="Helical" evidence="1">
    <location>
        <begin position="88"/>
        <end position="108"/>
    </location>
</feature>
<feature type="transmembrane region" description="Helical" evidence="1">
    <location>
        <begin position="132"/>
        <end position="152"/>
    </location>
</feature>
<feature type="transmembrane region" description="Helical" evidence="1">
    <location>
        <begin position="168"/>
        <end position="188"/>
    </location>
</feature>
<feature type="transmembrane region" description="Helical" evidence="1">
    <location>
        <begin position="195"/>
        <end position="217"/>
    </location>
</feature>
<feature type="transmembrane region" description="Helical" evidence="1">
    <location>
        <begin position="231"/>
        <end position="251"/>
    </location>
</feature>
<gene>
    <name evidence="1" type="primary">atpB</name>
    <name type="ordered locus">HS_1702</name>
</gene>
<keyword id="KW-0066">ATP synthesis</keyword>
<keyword id="KW-0997">Cell inner membrane</keyword>
<keyword id="KW-1003">Cell membrane</keyword>
<keyword id="KW-0138">CF(0)</keyword>
<keyword id="KW-0375">Hydrogen ion transport</keyword>
<keyword id="KW-0406">Ion transport</keyword>
<keyword id="KW-0472">Membrane</keyword>
<keyword id="KW-0812">Transmembrane</keyword>
<keyword id="KW-1133">Transmembrane helix</keyword>
<keyword id="KW-0813">Transport</keyword>
<accession>Q0I5W7</accession>
<protein>
    <recommendedName>
        <fullName evidence="1">ATP synthase subunit a</fullName>
    </recommendedName>
    <alternativeName>
        <fullName evidence="1">ATP synthase F0 sector subunit a</fullName>
    </alternativeName>
    <alternativeName>
        <fullName evidence="1">F-ATPase subunit 6</fullName>
    </alternativeName>
</protein>
<proteinExistence type="inferred from homology"/>
<dbReference type="EMBL" id="CP000436">
    <property type="protein sequence ID" value="ABI25970.1"/>
    <property type="molecule type" value="Genomic_DNA"/>
</dbReference>
<dbReference type="SMR" id="Q0I5W7"/>
<dbReference type="KEGG" id="hso:HS_1702"/>
<dbReference type="eggNOG" id="COG0356">
    <property type="taxonomic scope" value="Bacteria"/>
</dbReference>
<dbReference type="HOGENOM" id="CLU_041018_1_0_6"/>
<dbReference type="GO" id="GO:0005886">
    <property type="term" value="C:plasma membrane"/>
    <property type="evidence" value="ECO:0007669"/>
    <property type="project" value="UniProtKB-SubCell"/>
</dbReference>
<dbReference type="GO" id="GO:0045259">
    <property type="term" value="C:proton-transporting ATP synthase complex"/>
    <property type="evidence" value="ECO:0007669"/>
    <property type="project" value="UniProtKB-KW"/>
</dbReference>
<dbReference type="GO" id="GO:0046933">
    <property type="term" value="F:proton-transporting ATP synthase activity, rotational mechanism"/>
    <property type="evidence" value="ECO:0007669"/>
    <property type="project" value="UniProtKB-UniRule"/>
</dbReference>
<dbReference type="GO" id="GO:0042777">
    <property type="term" value="P:proton motive force-driven plasma membrane ATP synthesis"/>
    <property type="evidence" value="ECO:0007669"/>
    <property type="project" value="TreeGrafter"/>
</dbReference>
<dbReference type="CDD" id="cd00310">
    <property type="entry name" value="ATP-synt_Fo_a_6"/>
    <property type="match status" value="1"/>
</dbReference>
<dbReference type="FunFam" id="1.20.120.220:FF:000002">
    <property type="entry name" value="ATP synthase subunit a"/>
    <property type="match status" value="1"/>
</dbReference>
<dbReference type="Gene3D" id="1.20.120.220">
    <property type="entry name" value="ATP synthase, F0 complex, subunit A"/>
    <property type="match status" value="1"/>
</dbReference>
<dbReference type="HAMAP" id="MF_01393">
    <property type="entry name" value="ATP_synth_a_bact"/>
    <property type="match status" value="1"/>
</dbReference>
<dbReference type="InterPro" id="IPR045082">
    <property type="entry name" value="ATP_syn_F0_a_bact/chloroplast"/>
</dbReference>
<dbReference type="InterPro" id="IPR000568">
    <property type="entry name" value="ATP_synth_F0_asu"/>
</dbReference>
<dbReference type="InterPro" id="IPR023011">
    <property type="entry name" value="ATP_synth_F0_asu_AS"/>
</dbReference>
<dbReference type="InterPro" id="IPR035908">
    <property type="entry name" value="F0_ATP_A_sf"/>
</dbReference>
<dbReference type="NCBIfam" id="TIGR01131">
    <property type="entry name" value="ATP_synt_6_or_A"/>
    <property type="match status" value="1"/>
</dbReference>
<dbReference type="NCBIfam" id="NF004477">
    <property type="entry name" value="PRK05815.1-1"/>
    <property type="match status" value="1"/>
</dbReference>
<dbReference type="PANTHER" id="PTHR42823">
    <property type="entry name" value="ATP SYNTHASE SUBUNIT A, CHLOROPLASTIC"/>
    <property type="match status" value="1"/>
</dbReference>
<dbReference type="PANTHER" id="PTHR42823:SF3">
    <property type="entry name" value="ATP SYNTHASE SUBUNIT A, CHLOROPLASTIC"/>
    <property type="match status" value="1"/>
</dbReference>
<dbReference type="Pfam" id="PF00119">
    <property type="entry name" value="ATP-synt_A"/>
    <property type="match status" value="1"/>
</dbReference>
<dbReference type="PRINTS" id="PR00123">
    <property type="entry name" value="ATPASEA"/>
</dbReference>
<dbReference type="SUPFAM" id="SSF81336">
    <property type="entry name" value="F1F0 ATP synthase subunit A"/>
    <property type="match status" value="1"/>
</dbReference>
<dbReference type="PROSITE" id="PS00449">
    <property type="entry name" value="ATPASE_A"/>
    <property type="match status" value="1"/>
</dbReference>
<sequence length="265" mass="29715">MAGHTTADYISHHLTFLTTGQGFWNVHLDTLFFSLVSGVLFLFFFYRTASKATSGVPGKFQCLVEMLVEWVDGVVKDNIHGSDVRHQIGSLALTIFCWVFVMNAIDLIPVDFPPQFAELLGIHYLRAVPTADISATLGMSVCVFALIIFYTIKSKGLGGFVKEYTLHPFNHWAFIPVNFLLEAVTLLAKPISLAFRLFGNMYAGELIFVLIAVMYMADNIIPQVLGIPLHLIWAIFHILVITLQAFIFMMLTVVYLSIAYNKSDH</sequence>